<evidence type="ECO:0000255" key="1">
    <source>
        <dbReference type="PROSITE-ProRule" id="PRU00114"/>
    </source>
</evidence>
<protein>
    <recommendedName>
        <fullName>Ig kappa chain V-VI region NQ6-8.3.1</fullName>
    </recommendedName>
</protein>
<organism>
    <name type="scientific">Mus musculus</name>
    <name type="common">Mouse</name>
    <dbReference type="NCBI Taxonomy" id="10090"/>
    <lineage>
        <taxon>Eukaryota</taxon>
        <taxon>Metazoa</taxon>
        <taxon>Chordata</taxon>
        <taxon>Craniata</taxon>
        <taxon>Vertebrata</taxon>
        <taxon>Euteleostomi</taxon>
        <taxon>Mammalia</taxon>
        <taxon>Eutheria</taxon>
        <taxon>Euarchontoglires</taxon>
        <taxon>Glires</taxon>
        <taxon>Rodentia</taxon>
        <taxon>Myomorpha</taxon>
        <taxon>Muroidea</taxon>
        <taxon>Muridae</taxon>
        <taxon>Murinae</taxon>
        <taxon>Mus</taxon>
        <taxon>Mus</taxon>
    </lineage>
</organism>
<dbReference type="EMBL" id="K00740">
    <property type="protein sequence ID" value="AAA38685.1"/>
    <property type="molecule type" value="mRNA"/>
</dbReference>
<dbReference type="FunCoup" id="P04943">
    <property type="interactions" value="701"/>
</dbReference>
<dbReference type="InParanoid" id="P04943"/>
<dbReference type="Proteomes" id="UP000000589">
    <property type="component" value="Unplaced"/>
</dbReference>
<dbReference type="RNAct" id="P04943">
    <property type="molecule type" value="protein"/>
</dbReference>
<dbReference type="GO" id="GO:0019814">
    <property type="term" value="C:immunoglobulin complex"/>
    <property type="evidence" value="ECO:0000318"/>
    <property type="project" value="GO_Central"/>
</dbReference>
<dbReference type="GO" id="GO:0002250">
    <property type="term" value="P:adaptive immune response"/>
    <property type="evidence" value="ECO:0007669"/>
    <property type="project" value="UniProtKB-KW"/>
</dbReference>
<dbReference type="GO" id="GO:0006955">
    <property type="term" value="P:immune response"/>
    <property type="evidence" value="ECO:0000318"/>
    <property type="project" value="GO_Central"/>
</dbReference>
<dbReference type="FunFam" id="2.60.40.10:FF:001317">
    <property type="entry name" value="Immunoglobulin kappa chain variable 4-54"/>
    <property type="match status" value="1"/>
</dbReference>
<dbReference type="Gene3D" id="2.60.40.10">
    <property type="entry name" value="Immunoglobulins"/>
    <property type="match status" value="1"/>
</dbReference>
<dbReference type="InterPro" id="IPR007110">
    <property type="entry name" value="Ig-like_dom"/>
</dbReference>
<dbReference type="InterPro" id="IPR036179">
    <property type="entry name" value="Ig-like_dom_sf"/>
</dbReference>
<dbReference type="InterPro" id="IPR013783">
    <property type="entry name" value="Ig-like_fold"/>
</dbReference>
<dbReference type="InterPro" id="IPR003599">
    <property type="entry name" value="Ig_sub"/>
</dbReference>
<dbReference type="InterPro" id="IPR013106">
    <property type="entry name" value="Ig_V-set"/>
</dbReference>
<dbReference type="InterPro" id="IPR050150">
    <property type="entry name" value="IgV_Light_Chain"/>
</dbReference>
<dbReference type="PANTHER" id="PTHR23267">
    <property type="entry name" value="IMMUNOGLOBULIN LIGHT CHAIN"/>
    <property type="match status" value="1"/>
</dbReference>
<dbReference type="Pfam" id="PF07686">
    <property type="entry name" value="V-set"/>
    <property type="match status" value="1"/>
</dbReference>
<dbReference type="SMART" id="SM00409">
    <property type="entry name" value="IG"/>
    <property type="match status" value="1"/>
</dbReference>
<dbReference type="SMART" id="SM00406">
    <property type="entry name" value="IGv"/>
    <property type="match status" value="1"/>
</dbReference>
<dbReference type="SUPFAM" id="SSF48726">
    <property type="entry name" value="Immunoglobulin"/>
    <property type="match status" value="1"/>
</dbReference>
<dbReference type="PROSITE" id="PS50835">
    <property type="entry name" value="IG_LIKE"/>
    <property type="match status" value="1"/>
</dbReference>
<sequence length="107" mass="11573">QIVLTQSPAIMSASPGQKVTMTCSASSSVSYMHWYQQKSGTSPKRWIYDTSKLASGXPARFSGSGSATSYSLTITSMQAEDAATYYCQQWSSNPLTFGAGTKLELKR</sequence>
<keyword id="KW-1064">Adaptive immunity</keyword>
<keyword id="KW-1015">Disulfide bond</keyword>
<keyword id="KW-0374">Hybridoma</keyword>
<keyword id="KW-0391">Immunity</keyword>
<keyword id="KW-1280">Immunoglobulin</keyword>
<keyword id="KW-1185">Reference proteome</keyword>
<feature type="chain" id="PRO_0000059818" description="Ig kappa chain V-VI region NQ6-8.3.1">
    <location>
        <begin position="1"/>
        <end position="107" status="greater than"/>
    </location>
</feature>
<feature type="region of interest" description="Framework-1">
    <location>
        <begin position="1"/>
        <end position="23"/>
    </location>
</feature>
<feature type="region of interest" description="Complementarity-determining-1">
    <location>
        <begin position="24"/>
        <end position="33"/>
    </location>
</feature>
<feature type="region of interest" description="Framework-2">
    <location>
        <begin position="34"/>
        <end position="48"/>
    </location>
</feature>
<feature type="region of interest" description="Complementarity-determining-2">
    <location>
        <begin position="49"/>
        <end position="55"/>
    </location>
</feature>
<feature type="region of interest" description="Framework-3">
    <location>
        <begin position="56"/>
        <end position="87"/>
    </location>
</feature>
<feature type="region of interest" description="Complementarity-determining-3">
    <location>
        <begin position="88"/>
        <end position="96"/>
    </location>
</feature>
<feature type="region of interest" description="Framework-4">
    <location>
        <begin position="97"/>
        <end position="106"/>
    </location>
</feature>
<feature type="disulfide bond" evidence="1">
    <location>
        <begin position="23"/>
        <end position="87"/>
    </location>
</feature>
<feature type="non-terminal residue">
    <location>
        <position position="107"/>
    </location>
</feature>
<comment type="function">
    <text>Anti-2-phenyl oxazolone (PHOX) Antibody.</text>
</comment>
<reference key="1">
    <citation type="journal article" date="1983" name="Nature">
        <title>mRNA sequences define an unusually restricted IgG response to 2-phenyloxazolone and its early diversification.</title>
        <authorList>
            <person name="Kaartinen M."/>
            <person name="Griffiths G.M."/>
            <person name="Markham A.F."/>
            <person name="Milstein C."/>
        </authorList>
    </citation>
    <scope>NUCLEOTIDE SEQUENCE [MRNA]</scope>
</reference>
<name>KV6A9_MOUSE</name>
<proteinExistence type="evidence at transcript level"/>
<accession>P04943</accession>